<sequence>MTNHKENEMSKSELLVVTGLSGAGKSVVIQCLEDIGYFCVDNLPPILLPKFVELMEQGNPSLQKVAIAIDLRGKELFKSLVEEIDAIKSRNDVIVDVMFLEAETEKLISRYKESRRAHPLNENGQMSLMDSILEEKQLLSNIRTIANYIVDTTQLTTKELKARVKEKFEDENFKSFSINVSSFGFKHGIQKDADLVFDVRFLPNPYYVEDLRPMTGEDEPVYHYVMKWKETEIFFEKLMDLLKFMIPGYKKEGKSQLVIAIGCTGGQHRSVALAKRIGEELTEIFDYNVYVHHRDAHIESGVRK</sequence>
<comment type="function">
    <text evidence="1">Displays ATPase and GTPase activities.</text>
</comment>
<comment type="similarity">
    <text evidence="1">Belongs to the RapZ-like family.</text>
</comment>
<protein>
    <recommendedName>
        <fullName evidence="1">Nucleotide-binding protein SH2124</fullName>
    </recommendedName>
</protein>
<keyword id="KW-0067">ATP-binding</keyword>
<keyword id="KW-0342">GTP-binding</keyword>
<keyword id="KW-0547">Nucleotide-binding</keyword>
<proteinExistence type="inferred from homology"/>
<organism>
    <name type="scientific">Staphylococcus haemolyticus (strain JCSC1435)</name>
    <dbReference type="NCBI Taxonomy" id="279808"/>
    <lineage>
        <taxon>Bacteria</taxon>
        <taxon>Bacillati</taxon>
        <taxon>Bacillota</taxon>
        <taxon>Bacilli</taxon>
        <taxon>Bacillales</taxon>
        <taxon>Staphylococcaceae</taxon>
        <taxon>Staphylococcus</taxon>
    </lineage>
</organism>
<feature type="chain" id="PRO_0000259005" description="Nucleotide-binding protein SH2124">
    <location>
        <begin position="1"/>
        <end position="304"/>
    </location>
</feature>
<feature type="binding site" evidence="1">
    <location>
        <begin position="19"/>
        <end position="26"/>
    </location>
    <ligand>
        <name>ATP</name>
        <dbReference type="ChEBI" id="CHEBI:30616"/>
    </ligand>
</feature>
<feature type="binding site" evidence="1">
    <location>
        <begin position="70"/>
        <end position="73"/>
    </location>
    <ligand>
        <name>GTP</name>
        <dbReference type="ChEBI" id="CHEBI:37565"/>
    </ligand>
</feature>
<name>Y2124_STAHJ</name>
<evidence type="ECO:0000255" key="1">
    <source>
        <dbReference type="HAMAP-Rule" id="MF_00636"/>
    </source>
</evidence>
<reference key="1">
    <citation type="journal article" date="2005" name="J. Bacteriol.">
        <title>Whole-genome sequencing of Staphylococcus haemolyticus uncovers the extreme plasticity of its genome and the evolution of human-colonizing staphylococcal species.</title>
        <authorList>
            <person name="Takeuchi F."/>
            <person name="Watanabe S."/>
            <person name="Baba T."/>
            <person name="Yuzawa H."/>
            <person name="Ito T."/>
            <person name="Morimoto Y."/>
            <person name="Kuroda M."/>
            <person name="Cui L."/>
            <person name="Takahashi M."/>
            <person name="Ankai A."/>
            <person name="Baba S."/>
            <person name="Fukui S."/>
            <person name="Lee J.C."/>
            <person name="Hiramatsu K."/>
        </authorList>
    </citation>
    <scope>NUCLEOTIDE SEQUENCE [LARGE SCALE GENOMIC DNA]</scope>
    <source>
        <strain>JCSC1435</strain>
    </source>
</reference>
<accession>Q4L4J2</accession>
<dbReference type="EMBL" id="AP006716">
    <property type="protein sequence ID" value="BAE05433.1"/>
    <property type="molecule type" value="Genomic_DNA"/>
</dbReference>
<dbReference type="SMR" id="Q4L4J2"/>
<dbReference type="KEGG" id="sha:SH2124"/>
<dbReference type="eggNOG" id="COG1660">
    <property type="taxonomic scope" value="Bacteria"/>
</dbReference>
<dbReference type="HOGENOM" id="CLU_059558_0_0_9"/>
<dbReference type="OrthoDB" id="9784461at2"/>
<dbReference type="Proteomes" id="UP000000543">
    <property type="component" value="Chromosome"/>
</dbReference>
<dbReference type="GO" id="GO:0005524">
    <property type="term" value="F:ATP binding"/>
    <property type="evidence" value="ECO:0007669"/>
    <property type="project" value="UniProtKB-UniRule"/>
</dbReference>
<dbReference type="GO" id="GO:0005525">
    <property type="term" value="F:GTP binding"/>
    <property type="evidence" value="ECO:0007669"/>
    <property type="project" value="UniProtKB-UniRule"/>
</dbReference>
<dbReference type="Gene3D" id="3.40.50.300">
    <property type="entry name" value="P-loop containing nucleotide triphosphate hydrolases"/>
    <property type="match status" value="1"/>
</dbReference>
<dbReference type="HAMAP" id="MF_00636">
    <property type="entry name" value="RapZ_like"/>
    <property type="match status" value="1"/>
</dbReference>
<dbReference type="InterPro" id="IPR027417">
    <property type="entry name" value="P-loop_NTPase"/>
</dbReference>
<dbReference type="InterPro" id="IPR005337">
    <property type="entry name" value="RapZ-like"/>
</dbReference>
<dbReference type="InterPro" id="IPR053930">
    <property type="entry name" value="RapZ-like_N"/>
</dbReference>
<dbReference type="InterPro" id="IPR053931">
    <property type="entry name" value="RapZ_C"/>
</dbReference>
<dbReference type="NCBIfam" id="NF003828">
    <property type="entry name" value="PRK05416.1"/>
    <property type="match status" value="1"/>
</dbReference>
<dbReference type="PANTHER" id="PTHR30448">
    <property type="entry name" value="RNASE ADAPTER PROTEIN RAPZ"/>
    <property type="match status" value="1"/>
</dbReference>
<dbReference type="PANTHER" id="PTHR30448:SF0">
    <property type="entry name" value="RNASE ADAPTER PROTEIN RAPZ"/>
    <property type="match status" value="1"/>
</dbReference>
<dbReference type="Pfam" id="PF22740">
    <property type="entry name" value="PapZ_C"/>
    <property type="match status" value="1"/>
</dbReference>
<dbReference type="Pfam" id="PF03668">
    <property type="entry name" value="RapZ-like_N"/>
    <property type="match status" value="1"/>
</dbReference>
<dbReference type="PIRSF" id="PIRSF005052">
    <property type="entry name" value="P-loopkin"/>
    <property type="match status" value="1"/>
</dbReference>
<dbReference type="SUPFAM" id="SSF52540">
    <property type="entry name" value="P-loop containing nucleoside triphosphate hydrolases"/>
    <property type="match status" value="1"/>
</dbReference>
<gene>
    <name type="ordered locus">SH2124</name>
</gene>